<comment type="function">
    <text evidence="1">Involved in endoplasmic reticulum-associated protein degradation (ERAD). Acts as a platform to recruit both UBQLN1 and VCP to the ER during ERAD.</text>
</comment>
<comment type="subunit">
    <text evidence="1">Directly interacts with VCP. Interacts with UBQLN1. Forms a complex with VCP and UBQLN1.</text>
</comment>
<comment type="subcellular location">
    <subcellularLocation>
        <location evidence="1">Endoplasmic reticulum membrane</location>
        <topology evidence="1">Peripheral membrane protein</topology>
    </subcellularLocation>
    <subcellularLocation>
        <location evidence="1">Nucleus envelope</location>
    </subcellularLocation>
    <text evidence="1">Both the N- and the C-terminus face the cytosol. Also found in the nucleus envelope contiguous to the ER.</text>
</comment>
<comment type="domain">
    <text evidence="1">The UBX domain is required for interaction with VCP.</text>
</comment>
<comment type="domain">
    <text evidence="1">The intramembrane domain also contains the signal for ER targeting.</text>
</comment>
<gene>
    <name type="primary">Ubxn4</name>
    <name type="synonym">Ubxd2</name>
    <name type="synonym">Ubxdc1</name>
</gene>
<feature type="chain" id="PRO_0000317476" description="UBX domain-containing protein 4">
    <location>
        <begin position="1"/>
        <end position="506"/>
    </location>
</feature>
<feature type="topological domain" description="Cytoplasmic" evidence="2">
    <location>
        <begin position="1"/>
        <end position="411"/>
    </location>
</feature>
<feature type="intramembrane region" evidence="2">
    <location>
        <begin position="412"/>
        <end position="432"/>
    </location>
</feature>
<feature type="topological domain" description="Cytoplasmic" evidence="2">
    <location>
        <begin position="433"/>
        <end position="506"/>
    </location>
</feature>
<feature type="domain" description="UBX" evidence="3">
    <location>
        <begin position="313"/>
        <end position="391"/>
    </location>
</feature>
<feature type="region of interest" description="Interaction with UBQLN1" evidence="1">
    <location>
        <begin position="1"/>
        <end position="199"/>
    </location>
</feature>
<feature type="region of interest" description="Disordered" evidence="4">
    <location>
        <begin position="114"/>
        <end position="193"/>
    </location>
</feature>
<feature type="region of interest" description="Disordered" evidence="4">
    <location>
        <begin position="437"/>
        <end position="506"/>
    </location>
</feature>
<feature type="compositionally biased region" description="Polar residues" evidence="4">
    <location>
        <begin position="114"/>
        <end position="136"/>
    </location>
</feature>
<feature type="compositionally biased region" description="Polar residues" evidence="4">
    <location>
        <begin position="177"/>
        <end position="189"/>
    </location>
</feature>
<feature type="compositionally biased region" description="Low complexity" evidence="4">
    <location>
        <begin position="444"/>
        <end position="456"/>
    </location>
</feature>
<feature type="compositionally biased region" description="Basic and acidic residues" evidence="4">
    <location>
        <begin position="457"/>
        <end position="489"/>
    </location>
</feature>
<feature type="compositionally biased region" description="Polar residues" evidence="4">
    <location>
        <begin position="496"/>
        <end position="506"/>
    </location>
</feature>
<feature type="modified residue" description="Phosphothreonine" evidence="5">
    <location>
        <position position="487"/>
    </location>
</feature>
<evidence type="ECO:0000250" key="1">
    <source>
        <dbReference type="UniProtKB" id="Q92575"/>
    </source>
</evidence>
<evidence type="ECO:0000255" key="2"/>
<evidence type="ECO:0000255" key="3">
    <source>
        <dbReference type="PROSITE-ProRule" id="PRU00215"/>
    </source>
</evidence>
<evidence type="ECO:0000256" key="4">
    <source>
        <dbReference type="SAM" id="MobiDB-lite"/>
    </source>
</evidence>
<evidence type="ECO:0007744" key="5">
    <source>
    </source>
</evidence>
<proteinExistence type="evidence at protein level"/>
<dbReference type="EMBL" id="BC088845">
    <property type="protein sequence ID" value="AAH88845.1"/>
    <property type="molecule type" value="mRNA"/>
</dbReference>
<dbReference type="RefSeq" id="NP_001012025.1">
    <property type="nucleotide sequence ID" value="NM_001012025.2"/>
</dbReference>
<dbReference type="SMR" id="Q5HZY0"/>
<dbReference type="FunCoup" id="Q5HZY0">
    <property type="interactions" value="3546"/>
</dbReference>
<dbReference type="STRING" id="10116.ENSRNOP00000004878"/>
<dbReference type="GlyGen" id="Q5HZY0">
    <property type="glycosylation" value="1 site"/>
</dbReference>
<dbReference type="iPTMnet" id="Q5HZY0"/>
<dbReference type="PhosphoSitePlus" id="Q5HZY0"/>
<dbReference type="jPOST" id="Q5HZY0"/>
<dbReference type="PaxDb" id="10116-ENSRNOP00000004878"/>
<dbReference type="GeneID" id="304766"/>
<dbReference type="KEGG" id="rno:304766"/>
<dbReference type="UCSC" id="RGD:1307451">
    <property type="organism name" value="rat"/>
</dbReference>
<dbReference type="AGR" id="RGD:1307451"/>
<dbReference type="CTD" id="23190"/>
<dbReference type="RGD" id="1307451">
    <property type="gene designation" value="Ubxn4"/>
</dbReference>
<dbReference type="VEuPathDB" id="HostDB:ENSRNOG00000003625"/>
<dbReference type="eggNOG" id="KOG2507">
    <property type="taxonomic scope" value="Eukaryota"/>
</dbReference>
<dbReference type="HOGENOM" id="CLU_039222_1_1_1"/>
<dbReference type="InParanoid" id="Q5HZY0"/>
<dbReference type="OrthoDB" id="2445133at2759"/>
<dbReference type="PhylomeDB" id="Q5HZY0"/>
<dbReference type="TreeFam" id="TF317466"/>
<dbReference type="PRO" id="PR:Q5HZY0"/>
<dbReference type="Proteomes" id="UP000002494">
    <property type="component" value="Chromosome 13"/>
</dbReference>
<dbReference type="Bgee" id="ENSRNOG00000003625">
    <property type="expression patterns" value="Expressed in ovary and 20 other cell types or tissues"/>
</dbReference>
<dbReference type="GO" id="GO:0005783">
    <property type="term" value="C:endoplasmic reticulum"/>
    <property type="evidence" value="ECO:0000318"/>
    <property type="project" value="GO_Central"/>
</dbReference>
<dbReference type="GO" id="GO:0005789">
    <property type="term" value="C:endoplasmic reticulum membrane"/>
    <property type="evidence" value="ECO:0007669"/>
    <property type="project" value="UniProtKB-SubCell"/>
</dbReference>
<dbReference type="GO" id="GO:0005635">
    <property type="term" value="C:nuclear envelope"/>
    <property type="evidence" value="ECO:0007669"/>
    <property type="project" value="UniProtKB-SubCell"/>
</dbReference>
<dbReference type="GO" id="GO:0036503">
    <property type="term" value="P:ERAD pathway"/>
    <property type="evidence" value="ECO:0000250"/>
    <property type="project" value="UniProtKB"/>
</dbReference>
<dbReference type="GO" id="GO:0006986">
    <property type="term" value="P:response to unfolded protein"/>
    <property type="evidence" value="ECO:0007669"/>
    <property type="project" value="UniProtKB-KW"/>
</dbReference>
<dbReference type="CDD" id="cd16117">
    <property type="entry name" value="UBX_UBXN4"/>
    <property type="match status" value="1"/>
</dbReference>
<dbReference type="FunFam" id="3.10.20.90:FF:000196">
    <property type="entry name" value="UBX domain-containing protein 4"/>
    <property type="match status" value="1"/>
</dbReference>
<dbReference type="FunFam" id="3.40.30.10:FF:000163">
    <property type="entry name" value="UBX domain-containing protein 4"/>
    <property type="match status" value="1"/>
</dbReference>
<dbReference type="Gene3D" id="3.40.30.10">
    <property type="entry name" value="Glutaredoxin"/>
    <property type="match status" value="1"/>
</dbReference>
<dbReference type="Gene3D" id="3.10.20.90">
    <property type="entry name" value="Phosphatidylinositol 3-kinase Catalytic Subunit, Chain A, domain 1"/>
    <property type="match status" value="1"/>
</dbReference>
<dbReference type="InterPro" id="IPR036249">
    <property type="entry name" value="Thioredoxin-like_sf"/>
</dbReference>
<dbReference type="InterPro" id="IPR029071">
    <property type="entry name" value="Ubiquitin-like_domsf"/>
</dbReference>
<dbReference type="InterPro" id="IPR001012">
    <property type="entry name" value="UBX_dom"/>
</dbReference>
<dbReference type="PANTHER" id="PTHR46424">
    <property type="entry name" value="UBX DOMAIN-CONTAINING PROTEIN 4"/>
    <property type="match status" value="1"/>
</dbReference>
<dbReference type="PANTHER" id="PTHR46424:SF1">
    <property type="entry name" value="UBX DOMAIN-CONTAINING PROTEIN 4"/>
    <property type="match status" value="1"/>
</dbReference>
<dbReference type="Pfam" id="PF00789">
    <property type="entry name" value="UBX"/>
    <property type="match status" value="1"/>
</dbReference>
<dbReference type="Pfam" id="PF23187">
    <property type="entry name" value="UBX7_N"/>
    <property type="match status" value="1"/>
</dbReference>
<dbReference type="SMART" id="SM00166">
    <property type="entry name" value="UBX"/>
    <property type="match status" value="1"/>
</dbReference>
<dbReference type="SUPFAM" id="SSF52833">
    <property type="entry name" value="Thioredoxin-like"/>
    <property type="match status" value="1"/>
</dbReference>
<dbReference type="SUPFAM" id="SSF54236">
    <property type="entry name" value="Ubiquitin-like"/>
    <property type="match status" value="1"/>
</dbReference>
<dbReference type="PROSITE" id="PS50033">
    <property type="entry name" value="UBX"/>
    <property type="match status" value="1"/>
</dbReference>
<organism>
    <name type="scientific">Rattus norvegicus</name>
    <name type="common">Rat</name>
    <dbReference type="NCBI Taxonomy" id="10116"/>
    <lineage>
        <taxon>Eukaryota</taxon>
        <taxon>Metazoa</taxon>
        <taxon>Chordata</taxon>
        <taxon>Craniata</taxon>
        <taxon>Vertebrata</taxon>
        <taxon>Euteleostomi</taxon>
        <taxon>Mammalia</taxon>
        <taxon>Eutheria</taxon>
        <taxon>Euarchontoglires</taxon>
        <taxon>Glires</taxon>
        <taxon>Rodentia</taxon>
        <taxon>Myomorpha</taxon>
        <taxon>Muroidea</taxon>
        <taxon>Muridae</taxon>
        <taxon>Murinae</taxon>
        <taxon>Rattus</taxon>
    </lineage>
</organism>
<keyword id="KW-0256">Endoplasmic reticulum</keyword>
<keyword id="KW-0472">Membrane</keyword>
<keyword id="KW-0539">Nucleus</keyword>
<keyword id="KW-0597">Phosphoprotein</keyword>
<keyword id="KW-1185">Reference proteome</keyword>
<keyword id="KW-0834">Unfolded protein response</keyword>
<accession>Q5HZY0</accession>
<reference key="1">
    <citation type="journal article" date="2004" name="Genome Res.">
        <title>The status, quality, and expansion of the NIH full-length cDNA project: the Mammalian Gene Collection (MGC).</title>
        <authorList>
            <consortium name="The MGC Project Team"/>
        </authorList>
    </citation>
    <scope>NUCLEOTIDE SEQUENCE [LARGE SCALE MRNA]</scope>
    <source>
        <tissue>Ovary</tissue>
    </source>
</reference>
<reference key="2">
    <citation type="journal article" date="2012" name="Nat. Commun.">
        <title>Quantitative maps of protein phosphorylation sites across 14 different rat organs and tissues.</title>
        <authorList>
            <person name="Lundby A."/>
            <person name="Secher A."/>
            <person name="Lage K."/>
            <person name="Nordsborg N.B."/>
            <person name="Dmytriyev A."/>
            <person name="Lundby C."/>
            <person name="Olsen J.V."/>
        </authorList>
    </citation>
    <scope>PHOSPHORYLATION [LARGE SCALE ANALYSIS] AT THR-487</scope>
    <scope>IDENTIFICATION BY MASS SPECTROMETRY [LARGE SCALE ANALYSIS]</scope>
</reference>
<sequence length="506" mass="56394">MLWFQGAIPAAIASAKRSGAVFVVFVAGDDEQSTQMAASWEDEKVREASSDNFVAIKIDTKSEACLQFSQIYPVVCVPSSFFIGDSGIPLEVIAGSVSADELVTRIHKVQQMHSLKGETSVTNDKQSESSVSTPSASFEPDICESAESRNTELCETPTTSDPKSDTAAGGECAGHDSLSQEPPGCSNQRPAEDLTVRVERLTKKLEERREEKRKEEAQREIKKEIERRKTGKEMLDYKRKQEEELTKRMLEERSREKAEDRAARERIKQQIALDRAERAARFAKTKEAEAAKAAALLAKQAEAEVKRESSTRDRSTIARIQFRLPDGSSFTNQFPSDAPLEEARQFAAQTVGNTYGNFSLATMFPRREFTREDYKRKLLDLELAPSASVVLLPAGRPATSIVPSSSGDIWTLLGTVLYPFLAIWRLISNFLFSNPPPAQTSARATSTEPSNSASSSKSEKREPVRKRVLEKRGEDFKKEGKIYRLRTQDDGEDENNTWNGNSTQQM</sequence>
<protein>
    <recommendedName>
        <fullName>UBX domain-containing protein 4</fullName>
    </recommendedName>
    <alternativeName>
        <fullName>Erasin</fullName>
    </alternativeName>
    <alternativeName>
        <fullName>UBX domain-containing protein 2</fullName>
    </alternativeName>
</protein>
<name>UBXN4_RAT</name>